<protein>
    <recommendedName>
        <fullName evidence="1">Ribose import ATP-binding protein RbsA</fullName>
        <ecNumber evidence="1">7.5.2.7</ecNumber>
    </recommendedName>
</protein>
<sequence length="499" mass="55022">MIVEMSQISKSFSGNQVLKNVSFTLEKGEIHALMGENGAGKSTLMKILTGIYPRDEGVVRVKGKEVAYTHPKDAEKDGIAVIHQELNILPELSVAENLFLGNEYTVGKTGWLKTKKMNEYAEQQLAELGLKVKASDRAGALSVGKQQLIEIAKALMTNADIIIMDEPTAALTDREIDTLFTVIRGLQEKGVTFVYISHRMEEIFSLCQRITVLRDGNYVSTKVIAETSFDEIVKLMVGRELGGRYPDHDLEPGAVKLAVKNVSRKNEFESVTFEVREGEIFGIAGLMGAGRSEVVESIFGYRHLHSGTIEIDQKPVVFKRPVDAIENGIAFVPEDRKTKGLIVNFSVRDNLSITNLATVSSGNMMSSTKEQALYQELVKKLGVRTSGPHQKAKSLSGGNQQKVVIAKWLGMKPKVLILDEPTRGVDVGAKKEIYTIMNELAKQGVAIIMVSSELPEIIGMSTRVAVMFEGKLMKVLDRNELSEETIMHYATGGDKHVHQ</sequence>
<evidence type="ECO:0000255" key="1">
    <source>
        <dbReference type="HAMAP-Rule" id="MF_01716"/>
    </source>
</evidence>
<keyword id="KW-0067">ATP-binding</keyword>
<keyword id="KW-1003">Cell membrane</keyword>
<keyword id="KW-0472">Membrane</keyword>
<keyword id="KW-0547">Nucleotide-binding</keyword>
<keyword id="KW-1185">Reference proteome</keyword>
<keyword id="KW-0677">Repeat</keyword>
<keyword id="KW-0762">Sugar transport</keyword>
<keyword id="KW-1278">Translocase</keyword>
<keyword id="KW-0813">Transport</keyword>
<gene>
    <name evidence="1" type="primary">rbsA</name>
    <name type="ordered locus">ABC3546</name>
</gene>
<dbReference type="EC" id="7.5.2.7" evidence="1"/>
<dbReference type="EMBL" id="AP006627">
    <property type="protein sequence ID" value="BAD66079.1"/>
    <property type="molecule type" value="Genomic_DNA"/>
</dbReference>
<dbReference type="RefSeq" id="WP_011248384.1">
    <property type="nucleotide sequence ID" value="NC_006582.1"/>
</dbReference>
<dbReference type="SMR" id="Q5WC31"/>
<dbReference type="STRING" id="66692.ABC3546"/>
<dbReference type="KEGG" id="bcl:ABC3546"/>
<dbReference type="eggNOG" id="COG1129">
    <property type="taxonomic scope" value="Bacteria"/>
</dbReference>
<dbReference type="HOGENOM" id="CLU_000604_92_2_9"/>
<dbReference type="OrthoDB" id="9771863at2"/>
<dbReference type="Proteomes" id="UP000001168">
    <property type="component" value="Chromosome"/>
</dbReference>
<dbReference type="GO" id="GO:0005886">
    <property type="term" value="C:plasma membrane"/>
    <property type="evidence" value="ECO:0007669"/>
    <property type="project" value="UniProtKB-SubCell"/>
</dbReference>
<dbReference type="GO" id="GO:0015611">
    <property type="term" value="F:ABC-type D-ribose transporter activity"/>
    <property type="evidence" value="ECO:0007669"/>
    <property type="project" value="UniProtKB-EC"/>
</dbReference>
<dbReference type="GO" id="GO:0005524">
    <property type="term" value="F:ATP binding"/>
    <property type="evidence" value="ECO:0007669"/>
    <property type="project" value="UniProtKB-KW"/>
</dbReference>
<dbReference type="GO" id="GO:0016887">
    <property type="term" value="F:ATP hydrolysis activity"/>
    <property type="evidence" value="ECO:0007669"/>
    <property type="project" value="InterPro"/>
</dbReference>
<dbReference type="CDD" id="cd03216">
    <property type="entry name" value="ABC_Carb_Monos_I"/>
    <property type="match status" value="1"/>
</dbReference>
<dbReference type="CDD" id="cd03215">
    <property type="entry name" value="ABC_Carb_Monos_II"/>
    <property type="match status" value="1"/>
</dbReference>
<dbReference type="FunFam" id="3.40.50.300:FF:000126">
    <property type="entry name" value="Galactose/methyl galactoside import ATP-binding protein MglA"/>
    <property type="match status" value="1"/>
</dbReference>
<dbReference type="FunFam" id="3.40.50.300:FF:000127">
    <property type="entry name" value="Ribose import ATP-binding protein RbsA"/>
    <property type="match status" value="1"/>
</dbReference>
<dbReference type="Gene3D" id="3.40.50.300">
    <property type="entry name" value="P-loop containing nucleotide triphosphate hydrolases"/>
    <property type="match status" value="2"/>
</dbReference>
<dbReference type="InterPro" id="IPR003593">
    <property type="entry name" value="AAA+_ATPase"/>
</dbReference>
<dbReference type="InterPro" id="IPR050107">
    <property type="entry name" value="ABC_carbohydrate_import_ATPase"/>
</dbReference>
<dbReference type="InterPro" id="IPR003439">
    <property type="entry name" value="ABC_transporter-like_ATP-bd"/>
</dbReference>
<dbReference type="InterPro" id="IPR017871">
    <property type="entry name" value="ABC_transporter-like_CS"/>
</dbReference>
<dbReference type="InterPro" id="IPR027417">
    <property type="entry name" value="P-loop_NTPase"/>
</dbReference>
<dbReference type="PANTHER" id="PTHR43790">
    <property type="entry name" value="CARBOHYDRATE TRANSPORT ATP-BINDING PROTEIN MG119-RELATED"/>
    <property type="match status" value="1"/>
</dbReference>
<dbReference type="PANTHER" id="PTHR43790:SF3">
    <property type="entry name" value="D-ALLOSE IMPORT ATP-BINDING PROTEIN ALSA-RELATED"/>
    <property type="match status" value="1"/>
</dbReference>
<dbReference type="Pfam" id="PF00005">
    <property type="entry name" value="ABC_tran"/>
    <property type="match status" value="2"/>
</dbReference>
<dbReference type="SMART" id="SM00382">
    <property type="entry name" value="AAA"/>
    <property type="match status" value="2"/>
</dbReference>
<dbReference type="SUPFAM" id="SSF52540">
    <property type="entry name" value="P-loop containing nucleoside triphosphate hydrolases"/>
    <property type="match status" value="2"/>
</dbReference>
<dbReference type="PROSITE" id="PS00211">
    <property type="entry name" value="ABC_TRANSPORTER_1"/>
    <property type="match status" value="1"/>
</dbReference>
<dbReference type="PROSITE" id="PS50893">
    <property type="entry name" value="ABC_TRANSPORTER_2"/>
    <property type="match status" value="2"/>
</dbReference>
<dbReference type="PROSITE" id="PS51254">
    <property type="entry name" value="RBSA"/>
    <property type="match status" value="1"/>
</dbReference>
<name>RBSA_SHOC1</name>
<reference key="1">
    <citation type="submission" date="2003-10" db="EMBL/GenBank/DDBJ databases">
        <title>The complete genome sequence of the alkaliphilic Bacillus clausii KSM-K16.</title>
        <authorList>
            <person name="Takaki Y."/>
            <person name="Kageyama Y."/>
            <person name="Shimamura S."/>
            <person name="Suzuki H."/>
            <person name="Nishi S."/>
            <person name="Hatada Y."/>
            <person name="Kawai S."/>
            <person name="Ito S."/>
            <person name="Horikoshi K."/>
        </authorList>
    </citation>
    <scope>NUCLEOTIDE SEQUENCE [LARGE SCALE GENOMIC DNA]</scope>
    <source>
        <strain>KSM-K16</strain>
    </source>
</reference>
<comment type="function">
    <text evidence="1">Part of the ABC transporter complex RbsABC involved in ribose import. Responsible for energy coupling to the transport system.</text>
</comment>
<comment type="catalytic activity">
    <reaction evidence="1">
        <text>D-ribose(out) + ATP + H2O = D-ribose(in) + ADP + phosphate + H(+)</text>
        <dbReference type="Rhea" id="RHEA:29903"/>
        <dbReference type="ChEBI" id="CHEBI:15377"/>
        <dbReference type="ChEBI" id="CHEBI:15378"/>
        <dbReference type="ChEBI" id="CHEBI:30616"/>
        <dbReference type="ChEBI" id="CHEBI:43474"/>
        <dbReference type="ChEBI" id="CHEBI:47013"/>
        <dbReference type="ChEBI" id="CHEBI:456216"/>
        <dbReference type="EC" id="7.5.2.7"/>
    </reaction>
</comment>
<comment type="subunit">
    <text evidence="1">The complex is composed of an ATP-binding protein (RbsA), two transmembrane proteins (RbsC) and a solute-binding protein (RbsB).</text>
</comment>
<comment type="subcellular location">
    <subcellularLocation>
        <location evidence="1">Cell membrane</location>
        <topology evidence="1">Peripheral membrane protein</topology>
    </subcellularLocation>
</comment>
<comment type="similarity">
    <text evidence="1">Belongs to the ABC transporter superfamily. Ribose importer (TC 3.A.1.2.1) family.</text>
</comment>
<proteinExistence type="inferred from homology"/>
<feature type="chain" id="PRO_0000261040" description="Ribose import ATP-binding protein RbsA">
    <location>
        <begin position="1"/>
        <end position="499"/>
    </location>
</feature>
<feature type="domain" description="ABC transporter 1" evidence="1">
    <location>
        <begin position="3"/>
        <end position="240"/>
    </location>
</feature>
<feature type="domain" description="ABC transporter 2" evidence="1">
    <location>
        <begin position="250"/>
        <end position="494"/>
    </location>
</feature>
<feature type="binding site" evidence="1">
    <location>
        <begin position="35"/>
        <end position="42"/>
    </location>
    <ligand>
        <name>ATP</name>
        <dbReference type="ChEBI" id="CHEBI:30616"/>
    </ligand>
</feature>
<accession>Q5WC31</accession>
<organism>
    <name type="scientific">Shouchella clausii (strain KSM-K16)</name>
    <name type="common">Alkalihalobacillus clausii</name>
    <dbReference type="NCBI Taxonomy" id="66692"/>
    <lineage>
        <taxon>Bacteria</taxon>
        <taxon>Bacillati</taxon>
        <taxon>Bacillota</taxon>
        <taxon>Bacilli</taxon>
        <taxon>Bacillales</taxon>
        <taxon>Bacillaceae</taxon>
        <taxon>Shouchella</taxon>
    </lineage>
</organism>